<name>RLMG_SHESW</name>
<sequence length="378" mass="42054">MTTQFSVAGVELELLRYPTQQESNLQAWDAADEHLLKSLIESEQAAVPTAIINDSFGALSCGLSKLHPSWPLFVETDARTSFLGTEQNHGRNQLPMDNLQWFTSRDTLPENLALVLMKLPKNLSYFAHQLTRLSQVLPASTRVLVAAKSKSINSALLDIFAKHLGPASASLAWKNTRVITCVSDGKPRPLAKEVTWAIPEYQLEISNLSNVFAANKLDIGARIMLENLPKGDFKSIVDLGCGNGVLGLRTAQLFPEADIHFIDDSEMAVASAKANWARNQLPTDKGHFYWDDCMTHLPDDVQPDLVLCNPPFHQGEAITDHIAWQMFLDARRRLKEGGILHIVGNRHLAYHVKLQRLFKNCTTVASNGKFVILQAQKK</sequence>
<feature type="chain" id="PRO_0000366519" description="Ribosomal RNA large subunit methyltransferase G">
    <location>
        <begin position="1"/>
        <end position="378"/>
    </location>
</feature>
<evidence type="ECO:0000255" key="1">
    <source>
        <dbReference type="HAMAP-Rule" id="MF_01859"/>
    </source>
</evidence>
<evidence type="ECO:0000305" key="2"/>
<reference key="1">
    <citation type="submission" date="2006-12" db="EMBL/GenBank/DDBJ databases">
        <title>Complete sequence of Shewanella sp. W3-18-1.</title>
        <authorList>
            <consortium name="US DOE Joint Genome Institute"/>
            <person name="Copeland A."/>
            <person name="Lucas S."/>
            <person name="Lapidus A."/>
            <person name="Barry K."/>
            <person name="Detter J.C."/>
            <person name="Glavina del Rio T."/>
            <person name="Hammon N."/>
            <person name="Israni S."/>
            <person name="Dalin E."/>
            <person name="Tice H."/>
            <person name="Pitluck S."/>
            <person name="Chain P."/>
            <person name="Malfatti S."/>
            <person name="Shin M."/>
            <person name="Vergez L."/>
            <person name="Schmutz J."/>
            <person name="Larimer F."/>
            <person name="Land M."/>
            <person name="Hauser L."/>
            <person name="Kyrpides N."/>
            <person name="Lykidis A."/>
            <person name="Tiedje J."/>
            <person name="Richardson P."/>
        </authorList>
    </citation>
    <scope>NUCLEOTIDE SEQUENCE [LARGE SCALE GENOMIC DNA]</scope>
    <source>
        <strain>W3-18-1</strain>
    </source>
</reference>
<organism>
    <name type="scientific">Shewanella sp. (strain W3-18-1)</name>
    <dbReference type="NCBI Taxonomy" id="351745"/>
    <lineage>
        <taxon>Bacteria</taxon>
        <taxon>Pseudomonadati</taxon>
        <taxon>Pseudomonadota</taxon>
        <taxon>Gammaproteobacteria</taxon>
        <taxon>Alteromonadales</taxon>
        <taxon>Shewanellaceae</taxon>
        <taxon>Shewanella</taxon>
    </lineage>
</organism>
<comment type="function">
    <text evidence="1">Specifically methylates the guanine in position 1835 (m2G1835) of 23S rRNA.</text>
</comment>
<comment type="catalytic activity">
    <reaction evidence="1">
        <text>guanosine(1835) in 23S rRNA + S-adenosyl-L-methionine = N(2)-methylguanosine(1835) in 23S rRNA + S-adenosyl-L-homocysteine + H(+)</text>
        <dbReference type="Rhea" id="RHEA:42744"/>
        <dbReference type="Rhea" id="RHEA-COMP:10217"/>
        <dbReference type="Rhea" id="RHEA-COMP:10218"/>
        <dbReference type="ChEBI" id="CHEBI:15378"/>
        <dbReference type="ChEBI" id="CHEBI:57856"/>
        <dbReference type="ChEBI" id="CHEBI:59789"/>
        <dbReference type="ChEBI" id="CHEBI:74269"/>
        <dbReference type="ChEBI" id="CHEBI:74481"/>
        <dbReference type="EC" id="2.1.1.174"/>
    </reaction>
</comment>
<comment type="subcellular location">
    <subcellularLocation>
        <location evidence="1">Cytoplasm</location>
    </subcellularLocation>
</comment>
<comment type="similarity">
    <text evidence="1">Belongs to the methyltransferase superfamily. RlmG family.</text>
</comment>
<comment type="sequence caution" evidence="2">
    <conflict type="erroneous initiation">
        <sequence resource="EMBL-CDS" id="ABM26057"/>
    </conflict>
</comment>
<proteinExistence type="inferred from homology"/>
<accession>A1RN12</accession>
<keyword id="KW-0963">Cytoplasm</keyword>
<keyword id="KW-0489">Methyltransferase</keyword>
<keyword id="KW-0698">rRNA processing</keyword>
<keyword id="KW-0949">S-adenosyl-L-methionine</keyword>
<keyword id="KW-0808">Transferase</keyword>
<protein>
    <recommendedName>
        <fullName evidence="1">Ribosomal RNA large subunit methyltransferase G</fullName>
        <ecNumber evidence="1">2.1.1.174</ecNumber>
    </recommendedName>
    <alternativeName>
        <fullName evidence="1">23S rRNA m2G1835 methyltransferase</fullName>
    </alternativeName>
    <alternativeName>
        <fullName evidence="1">rRNA (guanine-N(2)-)-methyltransferase RlmG</fullName>
    </alternativeName>
</protein>
<gene>
    <name evidence="1" type="primary">rlmG</name>
    <name type="ordered locus">Sputw3181_3242</name>
</gene>
<dbReference type="EC" id="2.1.1.174" evidence="1"/>
<dbReference type="EMBL" id="CP000503">
    <property type="protein sequence ID" value="ABM26057.1"/>
    <property type="status" value="ALT_INIT"/>
    <property type="molecule type" value="Genomic_DNA"/>
</dbReference>
<dbReference type="RefSeq" id="WP_041408455.1">
    <property type="nucleotide sequence ID" value="NC_008750.1"/>
</dbReference>
<dbReference type="SMR" id="A1RN12"/>
<dbReference type="KEGG" id="shw:Sputw3181_3242"/>
<dbReference type="HOGENOM" id="CLU_040288_4_0_6"/>
<dbReference type="Proteomes" id="UP000002597">
    <property type="component" value="Chromosome"/>
</dbReference>
<dbReference type="GO" id="GO:0005737">
    <property type="term" value="C:cytoplasm"/>
    <property type="evidence" value="ECO:0007669"/>
    <property type="project" value="UniProtKB-SubCell"/>
</dbReference>
<dbReference type="GO" id="GO:0052916">
    <property type="term" value="F:23S rRNA (guanine(1835)-N(2))-methyltransferase activity"/>
    <property type="evidence" value="ECO:0007669"/>
    <property type="project" value="UniProtKB-EC"/>
</dbReference>
<dbReference type="GO" id="GO:0003676">
    <property type="term" value="F:nucleic acid binding"/>
    <property type="evidence" value="ECO:0007669"/>
    <property type="project" value="InterPro"/>
</dbReference>
<dbReference type="CDD" id="cd02440">
    <property type="entry name" value="AdoMet_MTases"/>
    <property type="match status" value="1"/>
</dbReference>
<dbReference type="Gene3D" id="3.40.50.150">
    <property type="entry name" value="Vaccinia Virus protein VP39"/>
    <property type="match status" value="2"/>
</dbReference>
<dbReference type="HAMAP" id="MF_01859">
    <property type="entry name" value="23SrRNA_methyltr_G"/>
    <property type="match status" value="1"/>
</dbReference>
<dbReference type="InterPro" id="IPR002052">
    <property type="entry name" value="DNA_methylase_N6_adenine_CS"/>
</dbReference>
<dbReference type="InterPro" id="IPR017237">
    <property type="entry name" value="rRNA_m2G-MeTrfase_RlmG"/>
</dbReference>
<dbReference type="InterPro" id="IPR046977">
    <property type="entry name" value="RsmC/RlmG"/>
</dbReference>
<dbReference type="InterPro" id="IPR029063">
    <property type="entry name" value="SAM-dependent_MTases_sf"/>
</dbReference>
<dbReference type="InterPro" id="IPR007848">
    <property type="entry name" value="Small_mtfrase_dom"/>
</dbReference>
<dbReference type="PANTHER" id="PTHR47816:SF5">
    <property type="entry name" value="RIBOSOMAL RNA LARGE SUBUNIT METHYLTRANSFERASE G"/>
    <property type="match status" value="1"/>
</dbReference>
<dbReference type="PANTHER" id="PTHR47816">
    <property type="entry name" value="RIBOSOMAL RNA SMALL SUBUNIT METHYLTRANSFERASE C"/>
    <property type="match status" value="1"/>
</dbReference>
<dbReference type="Pfam" id="PF05175">
    <property type="entry name" value="MTS"/>
    <property type="match status" value="1"/>
</dbReference>
<dbReference type="PIRSF" id="PIRSF037565">
    <property type="entry name" value="RRNA_m2G_Mtase_RsmD_prd"/>
    <property type="match status" value="1"/>
</dbReference>
<dbReference type="SUPFAM" id="SSF53335">
    <property type="entry name" value="S-adenosyl-L-methionine-dependent methyltransferases"/>
    <property type="match status" value="1"/>
</dbReference>